<protein>
    <recommendedName>
        <fullName evidence="5">Small ubiquitin-related modifier 2</fullName>
        <shortName evidence="5">SUMO-2</shortName>
    </recommendedName>
    <alternativeName>
        <fullName evidence="6">MIF2 suppressor</fullName>
    </alternativeName>
</protein>
<dbReference type="EMBL" id="L79950">
    <property type="protein sequence ID" value="AAR24618.1"/>
    <property type="molecule type" value="mRNA"/>
</dbReference>
<dbReference type="RefSeq" id="NP_001231073.1">
    <property type="nucleotide sequence ID" value="NM_001244144.1"/>
</dbReference>
<dbReference type="SMR" id="Q6LDZ8"/>
<dbReference type="PaxDb" id="10029-NP_001231073.1"/>
<dbReference type="Ensembl" id="ENSCGRT00001020609.1">
    <property type="protein sequence ID" value="ENSCGRP00001016365.1"/>
    <property type="gene ID" value="ENSCGRG00001016720.1"/>
</dbReference>
<dbReference type="GeneID" id="100689105"/>
<dbReference type="KEGG" id="cge:100689105"/>
<dbReference type="CTD" id="6613"/>
<dbReference type="eggNOG" id="KOG1769">
    <property type="taxonomic scope" value="Eukaryota"/>
</dbReference>
<dbReference type="GeneTree" id="ENSGT00950000182895"/>
<dbReference type="OrthoDB" id="9925208at2759"/>
<dbReference type="Proteomes" id="UP000694386">
    <property type="component" value="Unplaced"/>
</dbReference>
<dbReference type="Proteomes" id="UP001108280">
    <property type="component" value="Chromosome 7"/>
</dbReference>
<dbReference type="GO" id="GO:0098982">
    <property type="term" value="C:GABA-ergic synapse"/>
    <property type="evidence" value="ECO:0007669"/>
    <property type="project" value="Ensembl"/>
</dbReference>
<dbReference type="GO" id="GO:0098978">
    <property type="term" value="C:glutamatergic synapse"/>
    <property type="evidence" value="ECO:0007669"/>
    <property type="project" value="Ensembl"/>
</dbReference>
<dbReference type="GO" id="GO:0098686">
    <property type="term" value="C:hippocampal mossy fiber to CA3 synapse"/>
    <property type="evidence" value="ECO:0007669"/>
    <property type="project" value="Ensembl"/>
</dbReference>
<dbReference type="GO" id="GO:0016605">
    <property type="term" value="C:PML body"/>
    <property type="evidence" value="ECO:0000250"/>
    <property type="project" value="UniProtKB"/>
</dbReference>
<dbReference type="GO" id="GO:0099524">
    <property type="term" value="C:postsynaptic cytosol"/>
    <property type="evidence" value="ECO:0007669"/>
    <property type="project" value="Ensembl"/>
</dbReference>
<dbReference type="GO" id="GO:0099523">
    <property type="term" value="C:presynaptic cytosol"/>
    <property type="evidence" value="ECO:0007669"/>
    <property type="project" value="Ensembl"/>
</dbReference>
<dbReference type="GO" id="GO:0019789">
    <property type="term" value="F:SUMO transferase activity"/>
    <property type="evidence" value="ECO:0007669"/>
    <property type="project" value="Ensembl"/>
</dbReference>
<dbReference type="GO" id="GO:0031625">
    <property type="term" value="F:ubiquitin protein ligase binding"/>
    <property type="evidence" value="ECO:0000250"/>
    <property type="project" value="UniProtKB"/>
</dbReference>
<dbReference type="GO" id="GO:0045944">
    <property type="term" value="P:positive regulation of transcription by RNA polymerase II"/>
    <property type="evidence" value="ECO:0007669"/>
    <property type="project" value="Ensembl"/>
</dbReference>
<dbReference type="GO" id="GO:0016925">
    <property type="term" value="P:protein sumoylation"/>
    <property type="evidence" value="ECO:0000250"/>
    <property type="project" value="UniProtKB"/>
</dbReference>
<dbReference type="CDD" id="cd16115">
    <property type="entry name" value="Ubl_SUMO2_3_4"/>
    <property type="match status" value="1"/>
</dbReference>
<dbReference type="FunFam" id="3.10.20.90:FF:000482">
    <property type="entry name" value="Small ubiquitin-related modifier 2"/>
    <property type="match status" value="1"/>
</dbReference>
<dbReference type="Gene3D" id="3.10.20.90">
    <property type="entry name" value="Phosphatidylinositol 3-kinase Catalytic Subunit, Chain A, domain 1"/>
    <property type="match status" value="1"/>
</dbReference>
<dbReference type="InterPro" id="IPR022617">
    <property type="entry name" value="Rad60/SUMO-like_dom"/>
</dbReference>
<dbReference type="InterPro" id="IPR000626">
    <property type="entry name" value="Ubiquitin-like_dom"/>
</dbReference>
<dbReference type="InterPro" id="IPR029071">
    <property type="entry name" value="Ubiquitin-like_domsf"/>
</dbReference>
<dbReference type="PANTHER" id="PTHR10562">
    <property type="entry name" value="SMALL UBIQUITIN-RELATED MODIFIER"/>
    <property type="match status" value="1"/>
</dbReference>
<dbReference type="Pfam" id="PF11976">
    <property type="entry name" value="Rad60-SLD"/>
    <property type="match status" value="1"/>
</dbReference>
<dbReference type="SMART" id="SM00213">
    <property type="entry name" value="UBQ"/>
    <property type="match status" value="1"/>
</dbReference>
<dbReference type="SUPFAM" id="SSF54236">
    <property type="entry name" value="Ubiquitin-like"/>
    <property type="match status" value="1"/>
</dbReference>
<dbReference type="PROSITE" id="PS50053">
    <property type="entry name" value="UBIQUITIN_2"/>
    <property type="match status" value="1"/>
</dbReference>
<keyword id="KW-0007">Acetylation</keyword>
<keyword id="KW-1017">Isopeptide bond</keyword>
<keyword id="KW-0539">Nucleus</keyword>
<keyword id="KW-0832">Ubl conjugation</keyword>
<keyword id="KW-0833">Ubl conjugation pathway</keyword>
<comment type="function">
    <text evidence="2">Ubiquitin-like protein that can be covalently attached to proteins as a monomer or as a lysine-linked polymer. Covalent attachment via an isopeptide bond to its substrates requires prior activation by the E1 complex SAE1-SAE2 and linkage to the E2 enzyme UBE2I, and can be promoted by an E3 ligase such as PIAS1-4, RANBP2 or CBX4. This post-translational modification on lysine residues of proteins plays a crucial role in a number of cellular processes such as nuclear transport, DNA replication and repair, mitosis and signal transduction. Polymeric SUMO2 chains are also susceptible to polyubiquitination which functions as a signal for proteasomal degradation of modified proteins. Plays a role in the regulation of sumoylation status of SETX (By similarity).</text>
</comment>
<comment type="subunit">
    <text evidence="2 3">Interacts with SAE2 and UBE2I. Interacts with ZNF451. Identified in a complex with ZNF451 and UBE2I/UBC9, where one ZNF451 interacts with one UBE2I/UBC9 and two SUMO2 chains, one bound to the UBE2I/UBC9 active site and the other to another region of the same UBE2I/UBC9 molecule. Covalently attached to a number of proteins. Interacts with PELP1. Interacts with USP25; the interaction sumoylates USP25. Interacts with SIMC1, CASP8AP2, RNF111 and SOBP (via SIM domains). Interacts with MTA1 (By similarity). Interacts with HINT1 (By similarity). Interacts with GCNA (via SIM domains); this interaction allows the GCNA recruitment to DPCs sites (By similarity).</text>
</comment>
<comment type="subcellular location">
    <subcellularLocation>
        <location evidence="1">Nucleus</location>
    </subcellularLocation>
    <subcellularLocation>
        <location evidence="1">Nucleus</location>
        <location evidence="1">PML body</location>
    </subcellularLocation>
</comment>
<comment type="PTM">
    <text evidence="1">Polymeric chains can be formed through Lys-11 cross-linking. Polymeric SUMO2 chains undergo 'Lys-6'-, 'Lys-11'-, 'Lys-48'- and 'Lys-63'-linked polyubiquitination by RNF4 (By similarity).</text>
</comment>
<comment type="PTM">
    <text evidence="1">Cleavage of precursor form by SENP1 or SENP2 is necessary for function.</text>
</comment>
<comment type="PTM">
    <text evidence="1">Monoubiquitinated N-terminally by UBE2W, which primes it for RNF4-dependent polyubiquitination by the UBE2V1-UBE2N heterodimer.</text>
</comment>
<comment type="similarity">
    <text evidence="5">Belongs to the ubiquitin family. SUMO subfamily.</text>
</comment>
<evidence type="ECO:0000250" key="1"/>
<evidence type="ECO:0000250" key="2">
    <source>
        <dbReference type="UniProtKB" id="P61956"/>
    </source>
</evidence>
<evidence type="ECO:0000250" key="3">
    <source>
        <dbReference type="UniProtKB" id="P61957"/>
    </source>
</evidence>
<evidence type="ECO:0000255" key="4">
    <source>
        <dbReference type="PROSITE-ProRule" id="PRU00214"/>
    </source>
</evidence>
<evidence type="ECO:0000305" key="5"/>
<evidence type="ECO:0000312" key="6">
    <source>
        <dbReference type="EMBL" id="AAR24618.1"/>
    </source>
</evidence>
<sequence length="95" mass="10871">MADEKPKEGVKTENNDHINLKVAGQDGSVVQFKIKRHTPLSKLMKAYCERQGLSMRQIRFRFDGQPINETDTPAQLEMEDEDTIDVFQQQTGGVY</sequence>
<reference key="1">
    <citation type="submission" date="2001-12" db="EMBL/GenBank/DDBJ databases">
        <authorList>
            <person name="Mannen H."/>
            <person name="Li S.S.-L."/>
        </authorList>
    </citation>
    <scope>NUCLEOTIDE SEQUENCE [MRNA]</scope>
    <source>
        <tissue>Ovary</tissue>
    </source>
</reference>
<organism>
    <name type="scientific">Cricetulus griseus</name>
    <name type="common">Chinese hamster</name>
    <name type="synonym">Cricetulus barabensis griseus</name>
    <dbReference type="NCBI Taxonomy" id="10029"/>
    <lineage>
        <taxon>Eukaryota</taxon>
        <taxon>Metazoa</taxon>
        <taxon>Chordata</taxon>
        <taxon>Craniata</taxon>
        <taxon>Vertebrata</taxon>
        <taxon>Euteleostomi</taxon>
        <taxon>Mammalia</taxon>
        <taxon>Eutheria</taxon>
        <taxon>Euarchontoglires</taxon>
        <taxon>Glires</taxon>
        <taxon>Rodentia</taxon>
        <taxon>Myomorpha</taxon>
        <taxon>Muroidea</taxon>
        <taxon>Cricetidae</taxon>
        <taxon>Cricetinae</taxon>
        <taxon>Cricetulus</taxon>
    </lineage>
</organism>
<proteinExistence type="inferred from homology"/>
<feature type="chain" id="PRO_0000035947" description="Small ubiquitin-related modifier 2">
    <location>
        <begin position="1"/>
        <end position="93"/>
    </location>
</feature>
<feature type="propeptide" id="PRO_0000035948" evidence="1">
    <location>
        <begin position="94"/>
        <end position="95"/>
    </location>
</feature>
<feature type="domain" description="Ubiquitin-like" evidence="4">
    <location>
        <begin position="16"/>
        <end position="95"/>
    </location>
</feature>
<feature type="modified residue" description="N6-acetyllysine; alternate" evidence="2">
    <location>
        <position position="11"/>
    </location>
</feature>
<feature type="cross-link" description="Peptide (Met-Gly) (interchain with G-Cter in ubiquitin)" evidence="1">
    <location>
        <position position="1"/>
    </location>
</feature>
<feature type="cross-link" description="Glycyl lysine isopeptide (Lys-Gly) (interchain with G-Cter in SUMO2)" evidence="2">
    <location>
        <position position="5"/>
    </location>
</feature>
<feature type="cross-link" description="Glycyl lysine isopeptide (Lys-Gly) (interchain with G-Cter in SUMO2)" evidence="2">
    <location>
        <position position="7"/>
    </location>
</feature>
<feature type="cross-link" description="Glycyl lysine isopeptide (Lys-Gly) (interchain with G-Cter in SUMO); alternate" evidence="1">
    <location>
        <position position="11"/>
    </location>
</feature>
<feature type="cross-link" description="Glycyl lysine isopeptide (Lys-Gly) (interchain with G-Cter in SUMO1); alternate" evidence="2">
    <location>
        <position position="11"/>
    </location>
</feature>
<feature type="cross-link" description="Glycyl lysine isopeptide (Lys-Gly) (interchain with G-Cter in SUMO2); alternate" evidence="2">
    <location>
        <position position="11"/>
    </location>
</feature>
<feature type="cross-link" description="Glycyl lysine isopeptide (Lys-Gly) (interchain with G-Cter in ubiquitin); alternate" evidence="2">
    <location>
        <position position="11"/>
    </location>
</feature>
<feature type="cross-link" description="Glycyl lysine isopeptide (Lys-Gly) (interchain with G-Cter in SUMO2)" evidence="2">
    <location>
        <position position="21"/>
    </location>
</feature>
<feature type="cross-link" description="Glycyl lysine isopeptide (Gly-Lys) (interchain with K-? in acceptor proteins)" evidence="4">
    <location>
        <position position="93"/>
    </location>
</feature>
<accession>Q6LDZ8</accession>
<gene>
    <name type="primary">SUMO2</name>
</gene>
<name>SUMO2_CRIGR</name>